<dbReference type="EC" id="4.2.3.147" evidence="2"/>
<dbReference type="EMBL" id="JQ240316">
    <property type="protein sequence ID" value="AFU73868.1"/>
    <property type="molecule type" value="mRNA"/>
</dbReference>
<dbReference type="SMR" id="M4HYC8"/>
<dbReference type="KEGG" id="ag:AFU73868"/>
<dbReference type="BRENDA" id="4.2.3.147">
    <property type="organism ID" value="4843"/>
</dbReference>
<dbReference type="UniPathway" id="UPA00924"/>
<dbReference type="GO" id="GO:0000287">
    <property type="term" value="F:magnesium ion binding"/>
    <property type="evidence" value="ECO:0007669"/>
    <property type="project" value="InterPro"/>
</dbReference>
<dbReference type="GO" id="GO:0010333">
    <property type="term" value="F:terpene synthase activity"/>
    <property type="evidence" value="ECO:0007669"/>
    <property type="project" value="InterPro"/>
</dbReference>
<dbReference type="GO" id="GO:0006952">
    <property type="term" value="P:defense response"/>
    <property type="evidence" value="ECO:0007669"/>
    <property type="project" value="UniProtKB-KW"/>
</dbReference>
<dbReference type="GO" id="GO:0016102">
    <property type="term" value="P:diterpenoid biosynthetic process"/>
    <property type="evidence" value="ECO:0007669"/>
    <property type="project" value="InterPro"/>
</dbReference>
<dbReference type="CDD" id="cd00684">
    <property type="entry name" value="Terpene_cyclase_plant_C1"/>
    <property type="match status" value="1"/>
</dbReference>
<dbReference type="FunFam" id="1.50.10.130:FF:000002">
    <property type="entry name" value="Ent-copalyl diphosphate synthase, chloroplastic"/>
    <property type="match status" value="1"/>
</dbReference>
<dbReference type="FunFam" id="1.10.600.10:FF:000005">
    <property type="entry name" value="Ent-kaur-16-ene synthase, chloroplastic"/>
    <property type="match status" value="1"/>
</dbReference>
<dbReference type="Gene3D" id="1.50.10.160">
    <property type="match status" value="1"/>
</dbReference>
<dbReference type="Gene3D" id="1.10.600.10">
    <property type="entry name" value="Farnesyl Diphosphate Synthase"/>
    <property type="match status" value="1"/>
</dbReference>
<dbReference type="Gene3D" id="1.50.10.130">
    <property type="entry name" value="Terpene synthase, N-terminal domain"/>
    <property type="match status" value="1"/>
</dbReference>
<dbReference type="InterPro" id="IPR008949">
    <property type="entry name" value="Isoprenoid_synthase_dom_sf"/>
</dbReference>
<dbReference type="InterPro" id="IPR034741">
    <property type="entry name" value="Terpene_cyclase-like_1_C"/>
</dbReference>
<dbReference type="InterPro" id="IPR044814">
    <property type="entry name" value="Terpene_cyclase_plant_C1"/>
</dbReference>
<dbReference type="InterPro" id="IPR001906">
    <property type="entry name" value="Terpene_synth_N"/>
</dbReference>
<dbReference type="InterPro" id="IPR036965">
    <property type="entry name" value="Terpene_synth_N_sf"/>
</dbReference>
<dbReference type="InterPro" id="IPR050148">
    <property type="entry name" value="Terpene_synthase-like"/>
</dbReference>
<dbReference type="InterPro" id="IPR005630">
    <property type="entry name" value="Terpene_synthase_metal-bd"/>
</dbReference>
<dbReference type="InterPro" id="IPR008930">
    <property type="entry name" value="Terpenoid_cyclase/PrenylTrfase"/>
</dbReference>
<dbReference type="PANTHER" id="PTHR31739:SF25">
    <property type="entry name" value="(E,E)-GERANYLLINALOOL SYNTHASE"/>
    <property type="match status" value="1"/>
</dbReference>
<dbReference type="PANTHER" id="PTHR31739">
    <property type="entry name" value="ENT-COPALYL DIPHOSPHATE SYNTHASE, CHLOROPLASTIC"/>
    <property type="match status" value="1"/>
</dbReference>
<dbReference type="Pfam" id="PF01397">
    <property type="entry name" value="Terpene_synth"/>
    <property type="match status" value="1"/>
</dbReference>
<dbReference type="Pfam" id="PF03936">
    <property type="entry name" value="Terpene_synth_C"/>
    <property type="match status" value="1"/>
</dbReference>
<dbReference type="SFLD" id="SFLDS00005">
    <property type="entry name" value="Isoprenoid_Synthase_Type_I"/>
    <property type="match status" value="1"/>
</dbReference>
<dbReference type="SFLD" id="SFLDG01019">
    <property type="entry name" value="Terpene_Cyclase_Like_1_C_Termi"/>
    <property type="match status" value="1"/>
</dbReference>
<dbReference type="SFLD" id="SFLDG01014">
    <property type="entry name" value="Terpene_Cyclase_Like_1_N-term"/>
    <property type="match status" value="1"/>
</dbReference>
<dbReference type="SUPFAM" id="SSF48239">
    <property type="entry name" value="Terpenoid cyclases/Protein prenyltransferases"/>
    <property type="match status" value="2"/>
</dbReference>
<dbReference type="SUPFAM" id="SSF48576">
    <property type="entry name" value="Terpenoid synthases"/>
    <property type="match status" value="1"/>
</dbReference>
<proteinExistence type="evidence at protein level"/>
<keyword id="KW-0456">Lyase</keyword>
<keyword id="KW-0460">Magnesium</keyword>
<keyword id="KW-0479">Metal-binding</keyword>
<keyword id="KW-0611">Plant defense</keyword>
<organism>
    <name type="scientific">Pinus contorta</name>
    <name type="common">Shore pine</name>
    <name type="synonym">Lodgepole pine</name>
    <dbReference type="NCBI Taxonomy" id="3339"/>
    <lineage>
        <taxon>Eukaryota</taxon>
        <taxon>Viridiplantae</taxon>
        <taxon>Streptophyta</taxon>
        <taxon>Embryophyta</taxon>
        <taxon>Tracheophyta</taxon>
        <taxon>Spermatophyta</taxon>
        <taxon>Pinopsida</taxon>
        <taxon>Pinidae</taxon>
        <taxon>Conifers I</taxon>
        <taxon>Pinales</taxon>
        <taxon>Pinaceae</taxon>
        <taxon>Pinus</taxon>
        <taxon>Pinus subgen. Pinus</taxon>
    </lineage>
</organism>
<protein>
    <recommendedName>
        <fullName evidence="3">Monofunctional pimaradiene synthase</fullName>
        <shortName evidence="3">PcmPIM1</shortName>
        <ecNumber evidence="2">4.2.3.147</ecNumber>
    </recommendedName>
</protein>
<reference key="1">
    <citation type="journal article" date="2013" name="Plant Physiol.">
        <title>Evolution of conifer diterpene synthases: diterpene resin acid biosynthesis in lodgepole pine and jack pine involves monofunctional and bifunctional diterpene synthases.</title>
        <authorList>
            <person name="Hall D.E."/>
            <person name="Zerbe P."/>
            <person name="Jancsik S."/>
            <person name="Quesada A.L."/>
            <person name="Dullat H."/>
            <person name="Madilao L.L."/>
            <person name="Yuen M."/>
            <person name="Bohlmann J."/>
        </authorList>
    </citation>
    <scope>NUCLEOTIDE SEQUENCE [MRNA]</scope>
    <scope>FUNCTION</scope>
    <scope>CATALYTIC ACTIVITY</scope>
    <scope>3D-STRUCTURE MODELING</scope>
</reference>
<sequence>MAMPLCSLTSYNPITTTLRGHHFLTINAYVKTQCIPCFFIKLHTRSSGSKQRIIDLRSGSSNIVACVGEGATSLSSHSDIMKTAKREEIPPGVWKDDISDSIMSSHKPEADEKRVEILIAEIKSMFRGMGDGETTPSAYDTAWVAKIPALDGSDHPHFPQTLQWILQNQLQDGSWGEGTYFSTYDRLLATLACIITLTVWRTGQTQVRQGIEFFRKHAGTMEDEADNHQPIGFEFVFPAMINEAKSLCLDLPYDTPFIKQIIEKREAKLKMIPTDTLYTVPTTFLYYLEGLQEIIDCQKIIKLQSKDGSFLSSPASTAAVFMCTGNTKCLEFLNFVLIKFGNHVPCQYPLDLFERLWAVDIVERLGIDRHFKKEIKDALDYVYSHWDERGIRWARENPVAYIDVMATGIRILRLHRYNVSSDILKTFRDENGEFYRFPGQSERGVTDMLNLNRCSHVAFPGETVMEEAKLCTERYLWNALENVNPLDKWGLKENIRGEVEYALKYPWLRRLPRLETRNYIEHYGANDVWLGKMMHMMPYINDRKYLELAKLDFNNVQSIHQKELRELRRWWKSSGFAELNFLPDRVAEIFFSIASSMFEPELATCRAVYTKSTLCTVILDGFYDVHGSAEDIMLFNEAVKRWDHSLLDRMAEHIKTCFLALYNVVNEIAEEGRKRQGHDVLPYIRNLWEIQLESFTKEAEWSRAEHVPSFHEYIEAAAISSALPTLVLIGVIFTGEVLTDHILSQIDYRSKFAYLMSLTGRLANDTKTYQVERGQGEVASAIQCYMKENPELSEEEALEYIYRLMENALADFKCEFLNTKDVPEYCRRLVFDNARSMQLIYMEGDGFKLSHETEIKQHVKKILFEPVA</sequence>
<evidence type="ECO:0000250" key="1">
    <source>
        <dbReference type="UniProtKB" id="Q40577"/>
    </source>
</evidence>
<evidence type="ECO:0000269" key="2">
    <source>
    </source>
</evidence>
<evidence type="ECO:0000303" key="3">
    <source>
    </source>
</evidence>
<evidence type="ECO:0000305" key="4"/>
<gene>
    <name evidence="3" type="primary">TPS-mPim1</name>
</gene>
<name>MPIM1_PINCO</name>
<comment type="function">
    <text evidence="2">Involved in defensive oleoresin formation in conifers in response to insect attack or other injury. Involved in diterpene (C20) olefins biosynthesis. Monofunctional enzyme lacking the DXDD motif in the class II active site relevant for the cyclization of geranylgeranyl diphosphate (GGPP). Requires (+)-copalyl diphosphate ((+)-CPP) as substrate, but no activity with GGPP or ent-CPP. Pimaradiene is the major products of the enzyme.</text>
</comment>
<comment type="catalytic activity">
    <reaction evidence="2">
        <text>(+)-copalyl diphosphate = (-)-pimara-8(14),15-diene + diphosphate</text>
        <dbReference type="Rhea" id="RHEA:42984"/>
        <dbReference type="ChEBI" id="CHEBI:8210"/>
        <dbReference type="ChEBI" id="CHEBI:33019"/>
        <dbReference type="ChEBI" id="CHEBI:58635"/>
        <dbReference type="EC" id="4.2.3.147"/>
    </reaction>
</comment>
<comment type="cofactor">
    <cofactor evidence="1">
        <name>Mg(2+)</name>
        <dbReference type="ChEBI" id="CHEBI:18420"/>
    </cofactor>
    <text evidence="1">Binds 3 Mg(2+) ions per subunit.</text>
</comment>
<comment type="pathway">
    <text evidence="4">Terpene metabolism; oleoresin biosynthesis.</text>
</comment>
<comment type="miscellaneous">
    <text evidence="4">The Asp-Asp-Xaa-Xaa-Asp/Glu (DDXXD/E) motif important for the catalytic activity in the class I active site is degenetated, but the Mg(2+) binding sites are conserved.</text>
</comment>
<comment type="similarity">
    <text evidence="4">Belongs to the terpene synthase family. Tpsd subfamily.</text>
</comment>
<feature type="chain" id="PRO_0000431415" description="Monofunctional pimaradiene synthase">
    <location>
        <begin position="1"/>
        <end position="868"/>
    </location>
</feature>
<feature type="binding site" evidence="1">
    <location>
        <position position="620"/>
    </location>
    <ligand>
        <name>Mg(2+)</name>
        <dbReference type="ChEBI" id="CHEBI:18420"/>
        <label>1</label>
    </ligand>
</feature>
<feature type="binding site" evidence="1">
    <location>
        <position position="620"/>
    </location>
    <ligand>
        <name>Mg(2+)</name>
        <dbReference type="ChEBI" id="CHEBI:18420"/>
        <label>2</label>
    </ligand>
</feature>
<feature type="binding site" evidence="1">
    <location>
        <position position="624"/>
    </location>
    <ligand>
        <name>Mg(2+)</name>
        <dbReference type="ChEBI" id="CHEBI:18420"/>
        <label>1</label>
    </ligand>
</feature>
<feature type="binding site" evidence="1">
    <location>
        <position position="624"/>
    </location>
    <ligand>
        <name>Mg(2+)</name>
        <dbReference type="ChEBI" id="CHEBI:18420"/>
        <label>2</label>
    </ligand>
</feature>
<feature type="binding site" evidence="1">
    <location>
        <position position="764"/>
    </location>
    <ligand>
        <name>Mg(2+)</name>
        <dbReference type="ChEBI" id="CHEBI:18420"/>
        <label>3</label>
    </ligand>
</feature>
<feature type="binding site" evidence="1">
    <location>
        <position position="768"/>
    </location>
    <ligand>
        <name>Mg(2+)</name>
        <dbReference type="ChEBI" id="CHEBI:18420"/>
        <label>3</label>
    </ligand>
</feature>
<feature type="binding site" evidence="1">
    <location>
        <position position="772"/>
    </location>
    <ligand>
        <name>Mg(2+)</name>
        <dbReference type="ChEBI" id="CHEBI:18420"/>
        <label>3</label>
    </ligand>
</feature>
<accession>M4HYC8</accession>